<comment type="function">
    <text evidence="1">Catalyzes the GTP-dependent phosphorylation of the 3'-hydroxyl group of dephosphocoenzyme A to form coenzyme A (CoA).</text>
</comment>
<comment type="catalytic activity">
    <reaction evidence="1">
        <text>3'-dephospho-CoA + GTP = GDP + CoA + H(+)</text>
        <dbReference type="Rhea" id="RHEA:61156"/>
        <dbReference type="ChEBI" id="CHEBI:15378"/>
        <dbReference type="ChEBI" id="CHEBI:37565"/>
        <dbReference type="ChEBI" id="CHEBI:57287"/>
        <dbReference type="ChEBI" id="CHEBI:57328"/>
        <dbReference type="ChEBI" id="CHEBI:58189"/>
        <dbReference type="EC" id="2.7.1.237"/>
    </reaction>
</comment>
<comment type="pathway">
    <text evidence="1">Cofactor biosynthesis; coenzyme A biosynthesis.</text>
</comment>
<comment type="similarity">
    <text evidence="1">Belongs to the GTP-dependent DPCK family.</text>
</comment>
<accession>Q46FS5</accession>
<feature type="chain" id="PRO_1000025489" description="GTP-dependent dephospho-CoA kinase">
    <location>
        <begin position="1"/>
        <end position="195"/>
    </location>
</feature>
<feature type="binding site" evidence="1">
    <location>
        <position position="49"/>
    </location>
    <ligand>
        <name>GTP</name>
        <dbReference type="ChEBI" id="CHEBI:37565"/>
    </ligand>
</feature>
<feature type="binding site" evidence="1">
    <location>
        <position position="50"/>
    </location>
    <ligand>
        <name>GTP</name>
        <dbReference type="ChEBI" id="CHEBI:37565"/>
    </ligand>
</feature>
<feature type="binding site" evidence="1">
    <location>
        <position position="68"/>
    </location>
    <ligand>
        <name>GTP</name>
        <dbReference type="ChEBI" id="CHEBI:37565"/>
    </ligand>
</feature>
<feature type="binding site" evidence="1">
    <location>
        <position position="127"/>
    </location>
    <ligand>
        <name>GTP</name>
        <dbReference type="ChEBI" id="CHEBI:37565"/>
    </ligand>
</feature>
<feature type="binding site" evidence="1">
    <location>
        <position position="150"/>
    </location>
    <ligand>
        <name>GTP</name>
        <dbReference type="ChEBI" id="CHEBI:37565"/>
    </ligand>
</feature>
<organism>
    <name type="scientific">Methanosarcina barkeri (strain Fusaro / DSM 804)</name>
    <dbReference type="NCBI Taxonomy" id="269797"/>
    <lineage>
        <taxon>Archaea</taxon>
        <taxon>Methanobacteriati</taxon>
        <taxon>Methanobacteriota</taxon>
        <taxon>Stenosarchaea group</taxon>
        <taxon>Methanomicrobia</taxon>
        <taxon>Methanosarcinales</taxon>
        <taxon>Methanosarcinaceae</taxon>
        <taxon>Methanosarcina</taxon>
    </lineage>
</organism>
<evidence type="ECO:0000255" key="1">
    <source>
        <dbReference type="HAMAP-Rule" id="MF_00590"/>
    </source>
</evidence>
<dbReference type="EC" id="2.7.1.237" evidence="1"/>
<dbReference type="EMBL" id="CP000099">
    <property type="protein sequence ID" value="AAZ69267.1"/>
    <property type="molecule type" value="Genomic_DNA"/>
</dbReference>
<dbReference type="SMR" id="Q46FS5"/>
<dbReference type="STRING" id="269797.Mbar_A0283"/>
<dbReference type="PaxDb" id="269797-Mbar_A0283"/>
<dbReference type="KEGG" id="mba:Mbar_A0283"/>
<dbReference type="eggNOG" id="arCOG04076">
    <property type="taxonomic scope" value="Archaea"/>
</dbReference>
<dbReference type="HOGENOM" id="CLU_120795_1_0_2"/>
<dbReference type="OrthoDB" id="15447at2157"/>
<dbReference type="UniPathway" id="UPA00241"/>
<dbReference type="GO" id="GO:0005525">
    <property type="term" value="F:GTP binding"/>
    <property type="evidence" value="ECO:0007669"/>
    <property type="project" value="UniProtKB-UniRule"/>
</dbReference>
<dbReference type="GO" id="GO:0016301">
    <property type="term" value="F:kinase activity"/>
    <property type="evidence" value="ECO:0007669"/>
    <property type="project" value="UniProtKB-UniRule"/>
</dbReference>
<dbReference type="GO" id="GO:0015937">
    <property type="term" value="P:coenzyme A biosynthetic process"/>
    <property type="evidence" value="ECO:0007669"/>
    <property type="project" value="UniProtKB-UniRule"/>
</dbReference>
<dbReference type="HAMAP" id="MF_00590">
    <property type="entry name" value="Dephospho_CoA_kinase_GTP_dep"/>
    <property type="match status" value="1"/>
</dbReference>
<dbReference type="InterPro" id="IPR007164">
    <property type="entry name" value="GTP-dep_dephospho-CoA_kin"/>
</dbReference>
<dbReference type="PANTHER" id="PTHR40732:SF1">
    <property type="entry name" value="GTP-DEPENDENT DEPHOSPHO-COA KINASE"/>
    <property type="match status" value="1"/>
</dbReference>
<dbReference type="PANTHER" id="PTHR40732">
    <property type="entry name" value="UPF0218 PROTEIN TK1697"/>
    <property type="match status" value="1"/>
</dbReference>
<dbReference type="Pfam" id="PF04019">
    <property type="entry name" value="DUF359"/>
    <property type="match status" value="1"/>
</dbReference>
<dbReference type="PIRSF" id="PIRSF006533">
    <property type="entry name" value="UCP006533"/>
    <property type="match status" value="1"/>
</dbReference>
<sequence>MSVHIELPRELRPLMKKPLGTLYRGKGRDTIEKFAGELGSPTKLISVGDVTTFHLLEVGIIPDICIVDNRTKRKPVSSDVSARNMDKVYSEVSVDNPAGIITDELIKTLCEAFASEKPIRIFVRGEEDLATLPVILLAPLDAVVLYGQPDEGVVFVKVTEEKKGEIRTLFEKLISKNQNYELDKLRRILDGHKNS</sequence>
<proteinExistence type="inferred from homology"/>
<keyword id="KW-0173">Coenzyme A biosynthesis</keyword>
<keyword id="KW-0342">GTP-binding</keyword>
<keyword id="KW-0418">Kinase</keyword>
<keyword id="KW-0547">Nucleotide-binding</keyword>
<keyword id="KW-0808">Transferase</keyword>
<reference key="1">
    <citation type="journal article" date="2006" name="J. Bacteriol.">
        <title>The Methanosarcina barkeri genome: comparative analysis with Methanosarcina acetivorans and Methanosarcina mazei reveals extensive rearrangement within methanosarcinal genomes.</title>
        <authorList>
            <person name="Maeder D.L."/>
            <person name="Anderson I."/>
            <person name="Brettin T.S."/>
            <person name="Bruce D.C."/>
            <person name="Gilna P."/>
            <person name="Han C.S."/>
            <person name="Lapidus A."/>
            <person name="Metcalf W.W."/>
            <person name="Saunders E."/>
            <person name="Tapia R."/>
            <person name="Sowers K.R."/>
        </authorList>
    </citation>
    <scope>NUCLEOTIDE SEQUENCE [LARGE SCALE GENOMIC DNA]</scope>
    <source>
        <strain>Fusaro / DSM 804</strain>
    </source>
</reference>
<gene>
    <name type="ordered locus">Mbar_A0283</name>
</gene>
<protein>
    <recommendedName>
        <fullName evidence="1">GTP-dependent dephospho-CoA kinase</fullName>
        <ecNumber evidence="1">2.7.1.237</ecNumber>
    </recommendedName>
    <alternativeName>
        <fullName evidence="1">Dephospho-coenzyme A kinase</fullName>
        <shortName evidence="1">DPCK</shortName>
    </alternativeName>
</protein>
<name>DPCKG_METBF</name>